<feature type="chain" id="PRO_0000060639" description="Cytochrome b">
    <location>
        <begin position="1"/>
        <end position="379"/>
    </location>
</feature>
<feature type="transmembrane region" description="Helical" evidence="2">
    <location>
        <begin position="33"/>
        <end position="53"/>
    </location>
</feature>
<feature type="transmembrane region" description="Helical" evidence="2">
    <location>
        <begin position="77"/>
        <end position="98"/>
    </location>
</feature>
<feature type="transmembrane region" description="Helical" evidence="2">
    <location>
        <begin position="113"/>
        <end position="133"/>
    </location>
</feature>
<feature type="transmembrane region" description="Helical" evidence="2">
    <location>
        <begin position="178"/>
        <end position="198"/>
    </location>
</feature>
<feature type="transmembrane region" description="Helical" evidence="2">
    <location>
        <begin position="226"/>
        <end position="246"/>
    </location>
</feature>
<feature type="transmembrane region" description="Helical" evidence="2">
    <location>
        <begin position="288"/>
        <end position="308"/>
    </location>
</feature>
<feature type="transmembrane region" description="Helical" evidence="2">
    <location>
        <begin position="320"/>
        <end position="340"/>
    </location>
</feature>
<feature type="transmembrane region" description="Helical" evidence="2">
    <location>
        <begin position="347"/>
        <end position="367"/>
    </location>
</feature>
<feature type="binding site" description="axial binding residue" evidence="2">
    <location>
        <position position="83"/>
    </location>
    <ligand>
        <name>heme b</name>
        <dbReference type="ChEBI" id="CHEBI:60344"/>
        <label>b562</label>
    </ligand>
    <ligandPart>
        <name>Fe</name>
        <dbReference type="ChEBI" id="CHEBI:18248"/>
    </ligandPart>
</feature>
<feature type="binding site" description="axial binding residue" evidence="2">
    <location>
        <position position="97"/>
    </location>
    <ligand>
        <name>heme b</name>
        <dbReference type="ChEBI" id="CHEBI:60344"/>
        <label>b566</label>
    </ligand>
    <ligandPart>
        <name>Fe</name>
        <dbReference type="ChEBI" id="CHEBI:18248"/>
    </ligandPart>
</feature>
<feature type="binding site" description="axial binding residue" evidence="2">
    <location>
        <position position="182"/>
    </location>
    <ligand>
        <name>heme b</name>
        <dbReference type="ChEBI" id="CHEBI:60344"/>
        <label>b562</label>
    </ligand>
    <ligandPart>
        <name>Fe</name>
        <dbReference type="ChEBI" id="CHEBI:18248"/>
    </ligandPart>
</feature>
<feature type="binding site" description="axial binding residue" evidence="2">
    <location>
        <position position="196"/>
    </location>
    <ligand>
        <name>heme b</name>
        <dbReference type="ChEBI" id="CHEBI:60344"/>
        <label>b566</label>
    </ligand>
    <ligandPart>
        <name>Fe</name>
        <dbReference type="ChEBI" id="CHEBI:18248"/>
    </ligandPart>
</feature>
<feature type="binding site" evidence="2">
    <location>
        <position position="201"/>
    </location>
    <ligand>
        <name>a ubiquinone</name>
        <dbReference type="ChEBI" id="CHEBI:16389"/>
    </ligand>
</feature>
<protein>
    <recommendedName>
        <fullName>Cytochrome b</fullName>
    </recommendedName>
    <alternativeName>
        <fullName>Complex III subunit 3</fullName>
    </alternativeName>
    <alternativeName>
        <fullName>Complex III subunit III</fullName>
    </alternativeName>
    <alternativeName>
        <fullName>Cytochrome b-c1 complex subunit 3</fullName>
    </alternativeName>
    <alternativeName>
        <fullName>Ubiquinol-cytochrome-c reductase complex cytochrome b subunit</fullName>
    </alternativeName>
</protein>
<organism>
    <name type="scientific">Dermanura phaeotis</name>
    <name type="common">Pygmy fruit-eating bat</name>
    <name type="synonym">Artibeus phaeotis</name>
    <dbReference type="NCBI Taxonomy" id="40229"/>
    <lineage>
        <taxon>Eukaryota</taxon>
        <taxon>Metazoa</taxon>
        <taxon>Chordata</taxon>
        <taxon>Craniata</taxon>
        <taxon>Vertebrata</taxon>
        <taxon>Euteleostomi</taxon>
        <taxon>Mammalia</taxon>
        <taxon>Eutheria</taxon>
        <taxon>Laurasiatheria</taxon>
        <taxon>Chiroptera</taxon>
        <taxon>Yangochiroptera</taxon>
        <taxon>Phyllostomidae</taxon>
        <taxon>Stenodermatinae</taxon>
        <taxon>Dermanura</taxon>
    </lineage>
</organism>
<dbReference type="EMBL" id="U66514">
    <property type="protein sequence ID" value="AAB06784.1"/>
    <property type="molecule type" value="Genomic_DNA"/>
</dbReference>
<dbReference type="EMBL" id="L19512">
    <property type="protein sequence ID" value="AAA67851.1"/>
    <property type="molecule type" value="Genomic_DNA"/>
</dbReference>
<dbReference type="SMR" id="Q95744"/>
<dbReference type="GO" id="GO:0005743">
    <property type="term" value="C:mitochondrial inner membrane"/>
    <property type="evidence" value="ECO:0007669"/>
    <property type="project" value="UniProtKB-SubCell"/>
</dbReference>
<dbReference type="GO" id="GO:0045275">
    <property type="term" value="C:respiratory chain complex III"/>
    <property type="evidence" value="ECO:0007669"/>
    <property type="project" value="InterPro"/>
</dbReference>
<dbReference type="GO" id="GO:0046872">
    <property type="term" value="F:metal ion binding"/>
    <property type="evidence" value="ECO:0007669"/>
    <property type="project" value="UniProtKB-KW"/>
</dbReference>
<dbReference type="GO" id="GO:0008121">
    <property type="term" value="F:ubiquinol-cytochrome-c reductase activity"/>
    <property type="evidence" value="ECO:0007669"/>
    <property type="project" value="InterPro"/>
</dbReference>
<dbReference type="GO" id="GO:0006122">
    <property type="term" value="P:mitochondrial electron transport, ubiquinol to cytochrome c"/>
    <property type="evidence" value="ECO:0007669"/>
    <property type="project" value="TreeGrafter"/>
</dbReference>
<dbReference type="CDD" id="cd00290">
    <property type="entry name" value="cytochrome_b_C"/>
    <property type="match status" value="1"/>
</dbReference>
<dbReference type="CDD" id="cd00284">
    <property type="entry name" value="Cytochrome_b_N"/>
    <property type="match status" value="1"/>
</dbReference>
<dbReference type="FunFam" id="1.20.810.10:FF:000002">
    <property type="entry name" value="Cytochrome b"/>
    <property type="match status" value="1"/>
</dbReference>
<dbReference type="Gene3D" id="1.20.810.10">
    <property type="entry name" value="Cytochrome Bc1 Complex, Chain C"/>
    <property type="match status" value="1"/>
</dbReference>
<dbReference type="InterPro" id="IPR005798">
    <property type="entry name" value="Cyt_b/b6_C"/>
</dbReference>
<dbReference type="InterPro" id="IPR036150">
    <property type="entry name" value="Cyt_b/b6_C_sf"/>
</dbReference>
<dbReference type="InterPro" id="IPR005797">
    <property type="entry name" value="Cyt_b/b6_N"/>
</dbReference>
<dbReference type="InterPro" id="IPR027387">
    <property type="entry name" value="Cytb/b6-like_sf"/>
</dbReference>
<dbReference type="InterPro" id="IPR030689">
    <property type="entry name" value="Cytochrome_b"/>
</dbReference>
<dbReference type="InterPro" id="IPR048260">
    <property type="entry name" value="Cytochrome_b_C_euk/bac"/>
</dbReference>
<dbReference type="InterPro" id="IPR048259">
    <property type="entry name" value="Cytochrome_b_N_euk/bac"/>
</dbReference>
<dbReference type="InterPro" id="IPR016174">
    <property type="entry name" value="Di-haem_cyt_TM"/>
</dbReference>
<dbReference type="PANTHER" id="PTHR19271">
    <property type="entry name" value="CYTOCHROME B"/>
    <property type="match status" value="1"/>
</dbReference>
<dbReference type="PANTHER" id="PTHR19271:SF16">
    <property type="entry name" value="CYTOCHROME B"/>
    <property type="match status" value="1"/>
</dbReference>
<dbReference type="Pfam" id="PF00032">
    <property type="entry name" value="Cytochrom_B_C"/>
    <property type="match status" value="1"/>
</dbReference>
<dbReference type="Pfam" id="PF00033">
    <property type="entry name" value="Cytochrome_B"/>
    <property type="match status" value="1"/>
</dbReference>
<dbReference type="PIRSF" id="PIRSF038885">
    <property type="entry name" value="COB"/>
    <property type="match status" value="1"/>
</dbReference>
<dbReference type="SUPFAM" id="SSF81648">
    <property type="entry name" value="a domain/subunit of cytochrome bc1 complex (Ubiquinol-cytochrome c reductase)"/>
    <property type="match status" value="1"/>
</dbReference>
<dbReference type="SUPFAM" id="SSF81342">
    <property type="entry name" value="Transmembrane di-heme cytochromes"/>
    <property type="match status" value="1"/>
</dbReference>
<dbReference type="PROSITE" id="PS51003">
    <property type="entry name" value="CYTB_CTER"/>
    <property type="match status" value="1"/>
</dbReference>
<dbReference type="PROSITE" id="PS51002">
    <property type="entry name" value="CYTB_NTER"/>
    <property type="match status" value="1"/>
</dbReference>
<name>CYB_DERPH</name>
<comment type="function">
    <text evidence="2">Component of the ubiquinol-cytochrome c reductase complex (complex III or cytochrome b-c1 complex) that is part of the mitochondrial respiratory chain. The b-c1 complex mediates electron transfer from ubiquinol to cytochrome c. Contributes to the generation of a proton gradient across the mitochondrial membrane that is then used for ATP synthesis.</text>
</comment>
<comment type="cofactor">
    <cofactor evidence="2">
        <name>heme b</name>
        <dbReference type="ChEBI" id="CHEBI:60344"/>
    </cofactor>
    <text evidence="2">Binds 2 heme b groups non-covalently.</text>
</comment>
<comment type="subunit">
    <text evidence="2">The cytochrome bc1 complex contains 11 subunits: 3 respiratory subunits (MT-CYB, CYC1 and UQCRFS1), 2 core proteins (UQCRC1 and UQCRC2) and 6 low-molecular weight proteins (UQCRH/QCR6, UQCRB/QCR7, UQCRQ/QCR8, UQCR10/QCR9, UQCR11/QCR10 and a cleavage product of UQCRFS1). This cytochrome bc1 complex then forms a dimer.</text>
</comment>
<comment type="subcellular location">
    <subcellularLocation>
        <location evidence="2">Mitochondrion inner membrane</location>
        <topology evidence="2">Multi-pass membrane protein</topology>
    </subcellularLocation>
</comment>
<comment type="miscellaneous">
    <text evidence="1">Heme 1 (or BL or b562) is low-potential and absorbs at about 562 nm, and heme 2 (or BH or b566) is high-potential and absorbs at about 566 nm.</text>
</comment>
<comment type="similarity">
    <text evidence="3 4">Belongs to the cytochrome b family.</text>
</comment>
<comment type="caution">
    <text evidence="2">The full-length protein contains only eight transmembrane helices, not nine as predicted by bioinformatics tools.</text>
</comment>
<geneLocation type="mitochondrion"/>
<accession>Q95744</accession>
<accession>Q34360</accession>
<reference key="1">
    <citation type="submission" date="1996-08" db="EMBL/GenBank/DDBJ databases">
        <title>Phylogenetic accuracy, stability, and congruence: relationships within and among the New World bat genera Artibeus, Dermanura, and Koopmania.</title>
        <authorList>
            <person name="den Bussche R.A."/>
            <person name="Hudgeons J.L."/>
            <person name="Baker R.J."/>
        </authorList>
    </citation>
    <scope>NUCLEOTIDE SEQUENCE [GENOMIC DNA]</scope>
    <source>
        <strain>Isolate TK 5411</strain>
    </source>
</reference>
<reference key="2">
    <citation type="journal article" date="1993" name="Mol. Biol. Evol.">
        <title>Molecular phylogenetics of Stenodermatini bat genera: congruence of data from nuclear and mitochondrial DNA.</title>
        <authorList>
            <person name="den Bussche R.A."/>
            <person name="Baker R.J."/>
            <person name="Wichman H.A."/>
            <person name="Hamilton M.J."/>
        </authorList>
    </citation>
    <scope>NUCLEOTIDE SEQUENCE [GENOMIC DNA] OF 1-134</scope>
    <source>
        <strain>Isolate TK 5411</strain>
        <tissue>Muscle</tissue>
    </source>
</reference>
<proteinExistence type="inferred from homology"/>
<sequence length="379" mass="42795">MTNIRKTHPLLKIINSSFVDLPAPSSLSSWWNFGSLLGVCLGVQILTGLFLAMHYTSDTATAFNSVTHICRDVNYGWLLRYLHANGASMFFICLYLHVGRGLYYGSYTYSETWNIGILLLFAVMATAFMGYVLPWGQMSFWGATVITNLLSAIPYIGTELVQWIWGGFSVYKATLTRFFAFHFLLPFIVAALVMVHLLFLHETGSNNPTGIPSDPDMIPFHPYYTIKDILGFLVMLTALATLVLFSPDLLGDPDNYIPANPLITPPHIKPEWYFFFAYAILRSIPNKLGGVLALVMSILILAIVPILHMSKQRSMMFRPLSQCLFWLLVAVLFTLTWIGGQPVEHPYIIIGQTASVLYFLIILFLMPMTSMVENYLLKW</sequence>
<evidence type="ECO:0000250" key="1"/>
<evidence type="ECO:0000250" key="2">
    <source>
        <dbReference type="UniProtKB" id="P00157"/>
    </source>
</evidence>
<evidence type="ECO:0000255" key="3">
    <source>
        <dbReference type="PROSITE-ProRule" id="PRU00967"/>
    </source>
</evidence>
<evidence type="ECO:0000255" key="4">
    <source>
        <dbReference type="PROSITE-ProRule" id="PRU00968"/>
    </source>
</evidence>
<keyword id="KW-0249">Electron transport</keyword>
<keyword id="KW-0349">Heme</keyword>
<keyword id="KW-0408">Iron</keyword>
<keyword id="KW-0472">Membrane</keyword>
<keyword id="KW-0479">Metal-binding</keyword>
<keyword id="KW-0496">Mitochondrion</keyword>
<keyword id="KW-0999">Mitochondrion inner membrane</keyword>
<keyword id="KW-0679">Respiratory chain</keyword>
<keyword id="KW-0812">Transmembrane</keyword>
<keyword id="KW-1133">Transmembrane helix</keyword>
<keyword id="KW-0813">Transport</keyword>
<keyword id="KW-0830">Ubiquinone</keyword>
<gene>
    <name type="primary">MT-CYB</name>
    <name type="synonym">COB</name>
    <name type="synonym">CYTB</name>
    <name type="synonym">MTCYB</name>
</gene>